<evidence type="ECO:0000250" key="1"/>
<evidence type="ECO:0000250" key="2">
    <source>
        <dbReference type="UniProtKB" id="Q9Z2Q1"/>
    </source>
</evidence>
<evidence type="ECO:0000255" key="3">
    <source>
        <dbReference type="PROSITE-ProRule" id="PRU00221"/>
    </source>
</evidence>
<evidence type="ECO:0000256" key="4">
    <source>
        <dbReference type="SAM" id="MobiDB-lite"/>
    </source>
</evidence>
<evidence type="ECO:0000269" key="5">
    <source>
    </source>
</evidence>
<evidence type="ECO:0000269" key="6">
    <source>
    </source>
</evidence>
<evidence type="ECO:0000269" key="7">
    <source>
    </source>
</evidence>
<evidence type="ECO:0000269" key="8">
    <source>
    </source>
</evidence>
<evidence type="ECO:0000269" key="9">
    <source>
    </source>
</evidence>
<evidence type="ECO:0000269" key="10">
    <source>
    </source>
</evidence>
<evidence type="ECO:0000269" key="11">
    <source>
    </source>
</evidence>
<evidence type="ECO:0000269" key="12">
    <source>
    </source>
</evidence>
<evidence type="ECO:0000269" key="13">
    <source>
    </source>
</evidence>
<evidence type="ECO:0000269" key="14">
    <source>
    </source>
</evidence>
<evidence type="ECO:0000269" key="15">
    <source>
    </source>
</evidence>
<evidence type="ECO:0000269" key="16">
    <source>
    </source>
</evidence>
<evidence type="ECO:0000303" key="17">
    <source>
    </source>
</evidence>
<evidence type="ECO:0000303" key="18">
    <source>
    </source>
</evidence>
<evidence type="ECO:0000303" key="19">
    <source>
    </source>
</evidence>
<evidence type="ECO:0000303" key="20">
    <source ref="11"/>
</evidence>
<evidence type="ECO:0000303" key="21">
    <source ref="2"/>
</evidence>
<evidence type="ECO:0000305" key="22"/>
<evidence type="ECO:0007744" key="23">
    <source>
        <dbReference type="PDB" id="3WXA"/>
    </source>
</evidence>
<evidence type="ECO:0007744" key="24">
    <source>
    </source>
</evidence>
<evidence type="ECO:0007744" key="25">
    <source>
    </source>
</evidence>
<evidence type="ECO:0007744" key="26">
    <source>
    </source>
</evidence>
<evidence type="ECO:0007744" key="27">
    <source>
    </source>
</evidence>
<evidence type="ECO:0007744" key="28">
    <source>
    </source>
</evidence>
<evidence type="ECO:0007744" key="29">
    <source>
    </source>
</evidence>
<evidence type="ECO:0007829" key="30">
    <source>
        <dbReference type="PDB" id="3WXA"/>
    </source>
</evidence>
<evidence type="ECO:0007829" key="31">
    <source>
        <dbReference type="PDB" id="7SUL"/>
    </source>
</evidence>
<name>SC31A_HUMAN</name>
<gene>
    <name type="primary">SEC31A</name>
    <name type="synonym">KIAA0905</name>
    <name type="synonym">SEC31L1</name>
    <name type="ORF">HSPC275</name>
    <name type="ORF">HSPC334</name>
</gene>
<feature type="chain" id="PRO_0000295147" description="Protein transport protein Sec31A">
    <location>
        <begin position="1"/>
        <end position="1220"/>
    </location>
</feature>
<feature type="repeat" description="WD 1">
    <location>
        <begin position="4"/>
        <end position="47"/>
    </location>
</feature>
<feature type="repeat" description="WD 2">
    <location>
        <begin position="68"/>
        <end position="111"/>
    </location>
</feature>
<feature type="repeat" description="WD 3">
    <location>
        <begin position="120"/>
        <end position="160"/>
    </location>
</feature>
<feature type="repeat" description="WD 4">
    <location>
        <begin position="166"/>
        <end position="206"/>
    </location>
</feature>
<feature type="repeat" description="WD 5">
    <location>
        <begin position="209"/>
        <end position="254"/>
    </location>
</feature>
<feature type="repeat" description="WD 6">
    <location>
        <begin position="258"/>
        <end position="298"/>
    </location>
</feature>
<feature type="repeat" description="WD 7">
    <location>
        <begin position="301"/>
        <end position="342"/>
    </location>
</feature>
<feature type="repeat" description="WD 8; interaction with SEC13" evidence="3">
    <location>
        <begin position="397"/>
        <end position="430"/>
    </location>
</feature>
<feature type="region of interest" description="Interaction with SEC13" evidence="7">
    <location>
        <begin position="161"/>
        <end position="471"/>
    </location>
</feature>
<feature type="region of interest" description="Disordered" evidence="4">
    <location>
        <begin position="791"/>
        <end position="908"/>
    </location>
</feature>
<feature type="region of interest" description="Interaction with PDCD6" evidence="7">
    <location>
        <begin position="800"/>
        <end position="1113"/>
    </location>
</feature>
<feature type="region of interest" description="Disordered" evidence="4">
    <location>
        <begin position="924"/>
        <end position="1096"/>
    </location>
</feature>
<feature type="short sequence motif" description="ALG-2-binding site motif-2 (ABS-2),">
    <location>
        <begin position="842"/>
        <end position="848"/>
    </location>
</feature>
<feature type="compositionally biased region" description="Polar residues" evidence="4">
    <location>
        <begin position="849"/>
        <end position="859"/>
    </location>
</feature>
<feature type="compositionally biased region" description="Pro residues" evidence="4">
    <location>
        <begin position="869"/>
        <end position="882"/>
    </location>
</feature>
<feature type="compositionally biased region" description="Low complexity" evidence="4">
    <location>
        <begin position="962"/>
        <end position="972"/>
    </location>
</feature>
<feature type="compositionally biased region" description="Polar residues" evidence="4">
    <location>
        <begin position="984"/>
        <end position="995"/>
    </location>
</feature>
<feature type="compositionally biased region" description="Polar residues" evidence="4">
    <location>
        <begin position="1031"/>
        <end position="1053"/>
    </location>
</feature>
<feature type="modified residue" description="Phosphoserine" evidence="24 27 28 29">
    <location>
        <position position="527"/>
    </location>
</feature>
<feature type="modified residue" description="Phosphoserine" evidence="24">
    <location>
        <position position="532"/>
    </location>
</feature>
<feature type="modified residue" description="Phosphoserine" evidence="25 26 27 28 29">
    <location>
        <position position="799"/>
    </location>
</feature>
<feature type="modified residue" description="Phosphothreonine" evidence="26 28">
    <location>
        <position position="1161"/>
    </location>
</feature>
<feature type="modified residue" description="Phosphoserine" evidence="25 28 29">
    <location>
        <position position="1163"/>
    </location>
</feature>
<feature type="cross-link" description="Glycyl lysine isopeptide (Lys-Gly) (interchain with G-Cter in ubiquitin)" evidence="10">
    <location>
        <position position="647"/>
    </location>
</feature>
<feature type="cross-link" description="Glycyl lysine isopeptide (Lys-Gly) (interchain with G-Cter in ubiquitin)" evidence="10">
    <location>
        <position position="1217"/>
    </location>
</feature>
<feature type="splice variant" id="VSP_026742" description="In isoform 7." evidence="17">
    <location>
        <begin position="1"/>
        <end position="228"/>
    </location>
</feature>
<feature type="splice variant" id="VSP_044602" description="In isoform 9." evidence="17">
    <original>MKLKEVDRTAMQAWSPAQNHPIYLAT</original>
    <variation>MLGESDERCTNAGSGCRRSSP</variation>
    <location>
        <begin position="1"/>
        <end position="26"/>
    </location>
</feature>
<feature type="splice variant" id="VSP_026743" description="In isoform 7." evidence="17">
    <original>MVLASEDDRLPVIQMWDLRFASSPLRVLENHA</original>
    <variation>MVKLVLLSIVLLKVTVPKLSNYLLQLDFMPIH</variation>
    <location>
        <begin position="229"/>
        <end position="260"/>
    </location>
</feature>
<feature type="splice variant" id="VSP_026744" description="In isoform 4, isoform 6, isoform 7 and isoform 10." evidence="17 18 19 21">
    <location>
        <begin position="504"/>
        <end position="542"/>
    </location>
</feature>
<feature type="splice variant" id="VSP_026745" description="In isoform 5." evidence="18">
    <original>IALALN</original>
    <variation>VNFWES</variation>
    <location>
        <begin position="504"/>
        <end position="509"/>
    </location>
</feature>
<feature type="splice variant" id="VSP_026746" description="In isoform 5." evidence="18">
    <location>
        <begin position="510"/>
        <end position="1220"/>
    </location>
</feature>
<feature type="splice variant" id="VSP_026747" description="In isoform 7." evidence="17">
    <original>H</original>
    <variation>HVRIAPTVTTWSNKTPTALPSHPPAASPSDTQ</variation>
    <location>
        <position position="834"/>
    </location>
</feature>
<feature type="splice variant" id="VSP_026748" description="In isoform 3 and isoform 6." evidence="18 19">
    <original>P</original>
    <variation>R</variation>
    <location>
        <position position="876"/>
    </location>
</feature>
<feature type="splice variant" id="VSP_026749" description="In isoform 3 and isoform 6." evidence="18 19">
    <location>
        <begin position="877"/>
        <end position="990"/>
    </location>
</feature>
<feature type="splice variant" id="VSP_026750" description="In isoform 2, isoform 7, isoform 9 and isoform 10." evidence="17 18">
    <location>
        <begin position="974"/>
        <end position="988"/>
    </location>
</feature>
<feature type="splice variant" id="VSP_026751" description="In isoform 8." evidence="20">
    <original>T</original>
    <variation>TENQSIQDQAPMLE</variation>
    <location>
        <position position="989"/>
    </location>
</feature>
<feature type="sequence variant" id="VAR_033225" description="In dbSNP:rs34554214.">
    <original>I</original>
    <variation>V</variation>
    <location>
        <position position="263"/>
    </location>
</feature>
<feature type="sequence variant" id="VAR_053414" description="In dbSNP:rs3797036.">
    <original>N</original>
    <variation>K</variation>
    <location>
        <position position="456"/>
    </location>
</feature>
<feature type="sequence variant" id="VAR_033226" description="In dbSNP:rs35579207.">
    <original>P</original>
    <variation>L</variation>
    <location>
        <position position="841"/>
    </location>
</feature>
<feature type="sequence variant" id="VAR_033227" description="In dbSNP:rs35739017.">
    <original>P</original>
    <variation>T</variation>
    <location>
        <position position="1055"/>
    </location>
</feature>
<feature type="mutagenesis site" description="Does not abolish monoubiquitination by the BCR(KLHL12) E3 ubiquitin ligase complex, revealing flexibility of ubiquitination sites; when associated with R-1217." evidence="10">
    <original>K</original>
    <variation>R</variation>
    <location>
        <position position="647"/>
    </location>
</feature>
<feature type="mutagenesis site" description="Does not abolish monoubiquitination by the BCR(KLHL12) E3 ubiquitin ligase complex, revealing flexibility of ubiquitination sites; when associated with R-647." evidence="10">
    <original>K</original>
    <variation>R</variation>
    <location>
        <position position="1217"/>
    </location>
</feature>
<feature type="sequence conflict" description="In Ref. 2; BAA84923." evidence="22" ref="2">
    <original>K</original>
    <variation>E</variation>
    <location>
        <position position="200"/>
    </location>
</feature>
<feature type="sequence conflict" description="In Ref. 5; BAC86336." evidence="22" ref="5">
    <original>K</original>
    <variation>R</variation>
    <location>
        <position position="284"/>
    </location>
</feature>
<feature type="sequence conflict" description="In Ref. 2; BAA84923/BAA84924." evidence="22" ref="2">
    <original>A</original>
    <variation>S</variation>
    <location>
        <position position="854"/>
    </location>
</feature>
<feature type="sequence conflict" description="In Ref. 5; BAG58628." evidence="22" ref="5">
    <original>K</original>
    <variation>R</variation>
    <location>
        <position position="1007"/>
    </location>
</feature>
<feature type="strand" evidence="31">
    <location>
        <begin position="1"/>
        <end position="6"/>
    </location>
</feature>
<feature type="strand" evidence="31">
    <location>
        <begin position="10"/>
        <end position="14"/>
    </location>
</feature>
<feature type="strand" evidence="31">
    <location>
        <begin position="23"/>
        <end position="31"/>
    </location>
</feature>
<feature type="strand" evidence="31">
    <location>
        <begin position="41"/>
        <end position="47"/>
    </location>
</feature>
<feature type="strand" evidence="31">
    <location>
        <begin position="50"/>
        <end position="52"/>
    </location>
</feature>
<feature type="strand" evidence="31">
    <location>
        <begin position="58"/>
        <end position="66"/>
    </location>
</feature>
<feature type="strand" evidence="31">
    <location>
        <begin position="69"/>
        <end position="76"/>
    </location>
</feature>
<feature type="strand" evidence="31">
    <location>
        <begin position="87"/>
        <end position="92"/>
    </location>
</feature>
<feature type="strand" evidence="31">
    <location>
        <begin position="98"/>
        <end position="101"/>
    </location>
</feature>
<feature type="helix" evidence="31">
    <location>
        <begin position="103"/>
        <end position="108"/>
    </location>
</feature>
<feature type="strand" evidence="31">
    <location>
        <begin position="114"/>
        <end position="118"/>
    </location>
</feature>
<feature type="strand" evidence="31">
    <location>
        <begin position="127"/>
        <end position="130"/>
    </location>
</feature>
<feature type="strand" evidence="31">
    <location>
        <begin position="132"/>
        <end position="134"/>
    </location>
</feature>
<feature type="strand" evidence="31">
    <location>
        <begin position="137"/>
        <end position="141"/>
    </location>
</feature>
<feature type="strand" evidence="31">
    <location>
        <begin position="147"/>
        <end position="151"/>
    </location>
</feature>
<feature type="strand" evidence="31">
    <location>
        <begin position="161"/>
        <end position="163"/>
    </location>
</feature>
<feature type="strand" evidence="31">
    <location>
        <begin position="173"/>
        <end position="176"/>
    </location>
</feature>
<feature type="strand" evidence="31">
    <location>
        <begin position="183"/>
        <end position="187"/>
    </location>
</feature>
<feature type="strand" evidence="31">
    <location>
        <begin position="193"/>
        <end position="197"/>
    </location>
</feature>
<feature type="turn" evidence="31">
    <location>
        <begin position="198"/>
        <end position="201"/>
    </location>
</feature>
<feature type="strand" evidence="31">
    <location>
        <begin position="202"/>
        <end position="207"/>
    </location>
</feature>
<feature type="strand" evidence="31">
    <location>
        <begin position="211"/>
        <end position="213"/>
    </location>
</feature>
<feature type="strand" evidence="31">
    <location>
        <begin position="216"/>
        <end position="221"/>
    </location>
</feature>
<feature type="strand" evidence="31">
    <location>
        <begin position="228"/>
        <end position="233"/>
    </location>
</feature>
<feature type="strand" evidence="31">
    <location>
        <begin position="241"/>
        <end position="245"/>
    </location>
</feature>
<feature type="strand" evidence="31">
    <location>
        <begin position="253"/>
        <end position="256"/>
    </location>
</feature>
<feature type="strand" evidence="31">
    <location>
        <begin position="259"/>
        <end position="261"/>
    </location>
</feature>
<feature type="strand" evidence="31">
    <location>
        <begin position="263"/>
        <end position="268"/>
    </location>
</feature>
<feature type="strand" evidence="31">
    <location>
        <begin position="276"/>
        <end position="280"/>
    </location>
</feature>
<feature type="strand" evidence="31">
    <location>
        <begin position="285"/>
        <end position="288"/>
    </location>
</feature>
<feature type="turn" evidence="31">
    <location>
        <begin position="290"/>
        <end position="292"/>
    </location>
</feature>
<feature type="strand" evidence="31">
    <location>
        <begin position="295"/>
        <end position="298"/>
    </location>
</feature>
<feature type="strand" evidence="31">
    <location>
        <begin position="306"/>
        <end position="311"/>
    </location>
</feature>
<feature type="strand" evidence="31">
    <location>
        <begin position="318"/>
        <end position="323"/>
    </location>
</feature>
<feature type="turn" evidence="31">
    <location>
        <begin position="324"/>
        <end position="326"/>
    </location>
</feature>
<feature type="strand" evidence="31">
    <location>
        <begin position="327"/>
        <end position="332"/>
    </location>
</feature>
<feature type="strand" evidence="30">
    <location>
        <begin position="841"/>
        <end position="843"/>
    </location>
</feature>
<reference key="1">
    <citation type="journal article" date="2000" name="J. Biol. Chem.">
        <title>Mammalian homologues of yeast sec31p. An ubiquitously expressed form is localized to endoplasmic reticulum (ER) exit sites and is essential for ER-Golgi transport.</title>
        <authorList>
            <person name="Tang B.L."/>
            <person name="Zhang T."/>
            <person name="Low D.Y.H."/>
            <person name="Wong E.T."/>
            <person name="Horstmann H."/>
            <person name="Hong W."/>
        </authorList>
    </citation>
    <scope>NUCLEOTIDE SEQUENCE [MRNA] (ISOFORM 1)</scope>
    <scope>FUNCTION</scope>
    <scope>SUBCELLULAR LOCATION</scope>
    <scope>TISSUE SPECIFICITY</scope>
    <source>
        <tissue>Pancreas</tissue>
    </source>
</reference>
<reference key="2">
    <citation type="submission" date="1998-10" db="EMBL/GenBank/DDBJ databases">
        <title>The yeast web1-like human protein that has WD repeat domain.</title>
        <authorList>
            <person name="Noguchi J."/>
            <person name="Shibata M."/>
        </authorList>
    </citation>
    <scope>NUCLEOTIDE SEQUENCE [MRNA] (ISOFORMS 1 AND 4)</scope>
    <source>
        <tissue>Spleen</tissue>
    </source>
</reference>
<reference key="3">
    <citation type="journal article" date="1998" name="DNA Res.">
        <title>Prediction of the coding sequences of unidentified human genes. XII. The complete sequences of 100 new cDNA clones from brain which code for large proteins in vitro.</title>
        <authorList>
            <person name="Nagase T."/>
            <person name="Ishikawa K."/>
            <person name="Suyama M."/>
            <person name="Kikuno R."/>
            <person name="Hirosawa M."/>
            <person name="Miyajima N."/>
            <person name="Tanaka A."/>
            <person name="Kotani H."/>
            <person name="Nomura N."/>
            <person name="Ohara O."/>
        </authorList>
    </citation>
    <scope>NUCLEOTIDE SEQUENCE [LARGE SCALE MRNA] (ISOFORM 1)</scope>
    <source>
        <tissue>Brain</tissue>
    </source>
</reference>
<reference key="4">
    <citation type="submission" date="1998-12" db="EMBL/GenBank/DDBJ databases">
        <authorList>
            <person name="Ohara O."/>
            <person name="Suyama M."/>
            <person name="Kikuno R."/>
            <person name="Nagase T."/>
            <person name="Ishikawa K."/>
        </authorList>
    </citation>
    <scope>SEQUENCE REVISION</scope>
</reference>
<reference key="5">
    <citation type="journal article" date="2004" name="Nat. Genet.">
        <title>Complete sequencing and characterization of 21,243 full-length human cDNAs.</title>
        <authorList>
            <person name="Ota T."/>
            <person name="Suzuki Y."/>
            <person name="Nishikawa T."/>
            <person name="Otsuki T."/>
            <person name="Sugiyama T."/>
            <person name="Irie R."/>
            <person name="Wakamatsu A."/>
            <person name="Hayashi K."/>
            <person name="Sato H."/>
            <person name="Nagai K."/>
            <person name="Kimura K."/>
            <person name="Makita H."/>
            <person name="Sekine M."/>
            <person name="Obayashi M."/>
            <person name="Nishi T."/>
            <person name="Shibahara T."/>
            <person name="Tanaka T."/>
            <person name="Ishii S."/>
            <person name="Yamamoto J."/>
            <person name="Saito K."/>
            <person name="Kawai Y."/>
            <person name="Isono Y."/>
            <person name="Nakamura Y."/>
            <person name="Nagahari K."/>
            <person name="Murakami K."/>
            <person name="Yasuda T."/>
            <person name="Iwayanagi T."/>
            <person name="Wagatsuma M."/>
            <person name="Shiratori A."/>
            <person name="Sudo H."/>
            <person name="Hosoiri T."/>
            <person name="Kaku Y."/>
            <person name="Kodaira H."/>
            <person name="Kondo H."/>
            <person name="Sugawara M."/>
            <person name="Takahashi M."/>
            <person name="Kanda K."/>
            <person name="Yokoi T."/>
            <person name="Furuya T."/>
            <person name="Kikkawa E."/>
            <person name="Omura Y."/>
            <person name="Abe K."/>
            <person name="Kamihara K."/>
            <person name="Katsuta N."/>
            <person name="Sato K."/>
            <person name="Tanikawa M."/>
            <person name="Yamazaki M."/>
            <person name="Ninomiya K."/>
            <person name="Ishibashi T."/>
            <person name="Yamashita H."/>
            <person name="Murakawa K."/>
            <person name="Fujimori K."/>
            <person name="Tanai H."/>
            <person name="Kimata M."/>
            <person name="Watanabe M."/>
            <person name="Hiraoka S."/>
            <person name="Chiba Y."/>
            <person name="Ishida S."/>
            <person name="Ono Y."/>
            <person name="Takiguchi S."/>
            <person name="Watanabe S."/>
            <person name="Yosida M."/>
            <person name="Hotuta T."/>
            <person name="Kusano J."/>
            <person name="Kanehori K."/>
            <person name="Takahashi-Fujii A."/>
            <person name="Hara H."/>
            <person name="Tanase T.-O."/>
            <person name="Nomura Y."/>
            <person name="Togiya S."/>
            <person name="Komai F."/>
            <person name="Hara R."/>
            <person name="Takeuchi K."/>
            <person name="Arita M."/>
            <person name="Imose N."/>
            <person name="Musashino K."/>
            <person name="Yuuki H."/>
            <person name="Oshima A."/>
            <person name="Sasaki N."/>
            <person name="Aotsuka S."/>
            <person name="Yoshikawa Y."/>
            <person name="Matsunawa H."/>
            <person name="Ichihara T."/>
            <person name="Shiohata N."/>
            <person name="Sano S."/>
            <person name="Moriya S."/>
            <person name="Momiyama H."/>
            <person name="Satoh N."/>
            <person name="Takami S."/>
            <person name="Terashima Y."/>
            <person name="Suzuki O."/>
            <person name="Nakagawa S."/>
            <person name="Senoh A."/>
            <person name="Mizoguchi H."/>
            <person name="Goto Y."/>
            <person name="Shimizu F."/>
            <person name="Wakebe H."/>
            <person name="Hishigaki H."/>
            <person name="Watanabe T."/>
            <person name="Sugiyama A."/>
            <person name="Takemoto M."/>
            <person name="Kawakami B."/>
            <person name="Yamazaki M."/>
            <person name="Watanabe K."/>
            <person name="Kumagai A."/>
            <person name="Itakura S."/>
            <person name="Fukuzumi Y."/>
            <person name="Fujimori Y."/>
            <person name="Komiyama M."/>
            <person name="Tashiro H."/>
            <person name="Tanigami A."/>
            <person name="Fujiwara T."/>
            <person name="Ono T."/>
            <person name="Yamada K."/>
            <person name="Fujii Y."/>
            <person name="Ozaki K."/>
            <person name="Hirao M."/>
            <person name="Ohmori Y."/>
            <person name="Kawabata A."/>
            <person name="Hikiji T."/>
            <person name="Kobatake N."/>
            <person name="Inagaki H."/>
            <person name="Ikema Y."/>
            <person name="Okamoto S."/>
            <person name="Okitani R."/>
            <person name="Kawakami T."/>
            <person name="Noguchi S."/>
            <person name="Itoh T."/>
            <person name="Shigeta K."/>
            <person name="Senba T."/>
            <person name="Matsumura K."/>
            <person name="Nakajima Y."/>
            <person name="Mizuno T."/>
            <person name="Morinaga M."/>
            <person name="Sasaki M."/>
            <person name="Togashi T."/>
            <person name="Oyama M."/>
            <person name="Hata H."/>
            <person name="Watanabe M."/>
            <person name="Komatsu T."/>
            <person name="Mizushima-Sugano J."/>
            <person name="Satoh T."/>
            <person name="Shirai Y."/>
            <person name="Takahashi Y."/>
            <person name="Nakagawa K."/>
            <person name="Okumura K."/>
            <person name="Nagase T."/>
            <person name="Nomura N."/>
            <person name="Kikuchi H."/>
            <person name="Masuho Y."/>
            <person name="Yamashita R."/>
            <person name="Nakai K."/>
            <person name="Yada T."/>
            <person name="Nakamura Y."/>
            <person name="Ohara O."/>
            <person name="Isogai T."/>
            <person name="Sugano S."/>
        </authorList>
    </citation>
    <scope>NUCLEOTIDE SEQUENCE [LARGE SCALE MRNA] (ISOFORMS 7 AND 9)</scope>
    <source>
        <tissue>Hippocampus</tissue>
        <tissue>Testis</tissue>
    </source>
</reference>
<reference key="6">
    <citation type="journal article" date="2007" name="BMC Genomics">
        <title>The full-ORF clone resource of the German cDNA consortium.</title>
        <authorList>
            <person name="Bechtel S."/>
            <person name="Rosenfelder H."/>
            <person name="Duda A."/>
            <person name="Schmidt C.P."/>
            <person name="Ernst U."/>
            <person name="Wellenreuther R."/>
            <person name="Mehrle A."/>
            <person name="Schuster C."/>
            <person name="Bahr A."/>
            <person name="Bloecker H."/>
            <person name="Heubner D."/>
            <person name="Hoerlein A."/>
            <person name="Michel G."/>
            <person name="Wedler H."/>
            <person name="Koehrer K."/>
            <person name="Ottenwaelder B."/>
            <person name="Poustka A."/>
            <person name="Wiemann S."/>
            <person name="Schupp I."/>
        </authorList>
    </citation>
    <scope>NUCLEOTIDE SEQUENCE [LARGE SCALE MRNA] (ISOFORM 6)</scope>
    <source>
        <tissue>Uterine endothelium</tissue>
        <tissue>Uterus</tissue>
    </source>
</reference>
<reference key="7">
    <citation type="journal article" date="2005" name="Nature">
        <title>Generation and annotation of the DNA sequences of human chromosomes 2 and 4.</title>
        <authorList>
            <person name="Hillier L.W."/>
            <person name="Graves T.A."/>
            <person name="Fulton R.S."/>
            <person name="Fulton L.A."/>
            <person name="Pepin K.H."/>
            <person name="Minx P."/>
            <person name="Wagner-McPherson C."/>
            <person name="Layman D."/>
            <person name="Wylie K."/>
            <person name="Sekhon M."/>
            <person name="Becker M.C."/>
            <person name="Fewell G.A."/>
            <person name="Delehaunty K.D."/>
            <person name="Miner T.L."/>
            <person name="Nash W.E."/>
            <person name="Kremitzki C."/>
            <person name="Oddy L."/>
            <person name="Du H."/>
            <person name="Sun H."/>
            <person name="Bradshaw-Cordum H."/>
            <person name="Ali J."/>
            <person name="Carter J."/>
            <person name="Cordes M."/>
            <person name="Harris A."/>
            <person name="Isak A."/>
            <person name="van Brunt A."/>
            <person name="Nguyen C."/>
            <person name="Du F."/>
            <person name="Courtney L."/>
            <person name="Kalicki J."/>
            <person name="Ozersky P."/>
            <person name="Abbott S."/>
            <person name="Armstrong J."/>
            <person name="Belter E.A."/>
            <person name="Caruso L."/>
            <person name="Cedroni M."/>
            <person name="Cotton M."/>
            <person name="Davidson T."/>
            <person name="Desai A."/>
            <person name="Elliott G."/>
            <person name="Erb T."/>
            <person name="Fronick C."/>
            <person name="Gaige T."/>
            <person name="Haakenson W."/>
            <person name="Haglund K."/>
            <person name="Holmes A."/>
            <person name="Harkins R."/>
            <person name="Kim K."/>
            <person name="Kruchowski S.S."/>
            <person name="Strong C.M."/>
            <person name="Grewal N."/>
            <person name="Goyea E."/>
            <person name="Hou S."/>
            <person name="Levy A."/>
            <person name="Martinka S."/>
            <person name="Mead K."/>
            <person name="McLellan M.D."/>
            <person name="Meyer R."/>
            <person name="Randall-Maher J."/>
            <person name="Tomlinson C."/>
            <person name="Dauphin-Kohlberg S."/>
            <person name="Kozlowicz-Reilly A."/>
            <person name="Shah N."/>
            <person name="Swearengen-Shahid S."/>
            <person name="Snider J."/>
            <person name="Strong J.T."/>
            <person name="Thompson J."/>
            <person name="Yoakum M."/>
            <person name="Leonard S."/>
            <person name="Pearman C."/>
            <person name="Trani L."/>
            <person name="Radionenko M."/>
            <person name="Waligorski J.E."/>
            <person name="Wang C."/>
            <person name="Rock S.M."/>
            <person name="Tin-Wollam A.-M."/>
            <person name="Maupin R."/>
            <person name="Latreille P."/>
            <person name="Wendl M.C."/>
            <person name="Yang S.-P."/>
            <person name="Pohl C."/>
            <person name="Wallis J.W."/>
            <person name="Spieth J."/>
            <person name="Bieri T.A."/>
            <person name="Berkowicz N."/>
            <person name="Nelson J.O."/>
            <person name="Osborne J."/>
            <person name="Ding L."/>
            <person name="Meyer R."/>
            <person name="Sabo A."/>
            <person name="Shotland Y."/>
            <person name="Sinha P."/>
            <person name="Wohldmann P.E."/>
            <person name="Cook L.L."/>
            <person name="Hickenbotham M.T."/>
            <person name="Eldred J."/>
            <person name="Williams D."/>
            <person name="Jones T.A."/>
            <person name="She X."/>
            <person name="Ciccarelli F.D."/>
            <person name="Izaurralde E."/>
            <person name="Taylor J."/>
            <person name="Schmutz J."/>
            <person name="Myers R.M."/>
            <person name="Cox D.R."/>
            <person name="Huang X."/>
            <person name="McPherson J.D."/>
            <person name="Mardis E.R."/>
            <person name="Clifton S.W."/>
            <person name="Warren W.C."/>
            <person name="Chinwalla A.T."/>
            <person name="Eddy S.R."/>
            <person name="Marra M.A."/>
            <person name="Ovcharenko I."/>
            <person name="Furey T.S."/>
            <person name="Miller W."/>
            <person name="Eichler E.E."/>
            <person name="Bork P."/>
            <person name="Suyama M."/>
            <person name="Torrents D."/>
            <person name="Waterston R.H."/>
            <person name="Wilson R.K."/>
        </authorList>
    </citation>
    <scope>NUCLEOTIDE SEQUENCE [LARGE SCALE GENOMIC DNA]</scope>
</reference>
<reference key="8">
    <citation type="submission" date="2005-07" db="EMBL/GenBank/DDBJ databases">
        <authorList>
            <person name="Mural R.J."/>
            <person name="Istrail S."/>
            <person name="Sutton G.G."/>
            <person name="Florea L."/>
            <person name="Halpern A.L."/>
            <person name="Mobarry C.M."/>
            <person name="Lippert R."/>
            <person name="Walenz B."/>
            <person name="Shatkay H."/>
            <person name="Dew I."/>
            <person name="Miller J.R."/>
            <person name="Flanigan M.J."/>
            <person name="Edwards N.J."/>
            <person name="Bolanos R."/>
            <person name="Fasulo D."/>
            <person name="Halldorsson B.V."/>
            <person name="Hannenhalli S."/>
            <person name="Turner R."/>
            <person name="Yooseph S."/>
            <person name="Lu F."/>
            <person name="Nusskern D.R."/>
            <person name="Shue B.C."/>
            <person name="Zheng X.H."/>
            <person name="Zhong F."/>
            <person name="Delcher A.L."/>
            <person name="Huson D.H."/>
            <person name="Kravitz S.A."/>
            <person name="Mouchard L."/>
            <person name="Reinert K."/>
            <person name="Remington K.A."/>
            <person name="Clark A.G."/>
            <person name="Waterman M.S."/>
            <person name="Eichler E.E."/>
            <person name="Adams M.D."/>
            <person name="Hunkapiller M.W."/>
            <person name="Myers E.W."/>
            <person name="Venter J.C."/>
        </authorList>
    </citation>
    <scope>NUCLEOTIDE SEQUENCE [LARGE SCALE GENOMIC DNA]</scope>
</reference>
<reference key="9">
    <citation type="journal article" date="2004" name="Genome Res.">
        <title>The status, quality, and expansion of the NIH full-length cDNA project: the Mammalian Gene Collection (MGC).</title>
        <authorList>
            <consortium name="The MGC Project Team"/>
        </authorList>
    </citation>
    <scope>NUCLEOTIDE SEQUENCE [LARGE SCALE MRNA] (ISOFORMS 2; 3; 5 AND 10)</scope>
    <source>
        <tissue>Brain</tissue>
        <tissue>PNS</tissue>
    </source>
</reference>
<reference key="10">
    <citation type="submission" date="2002-07" db="EMBL/GenBank/DDBJ databases">
        <title>SEC31 splicing variant.</title>
        <authorList>
            <person name="Yang Y."/>
            <person name="Trejo J."/>
        </authorList>
    </citation>
    <scope>NUCLEOTIDE SEQUENCE [MRNA] OF 599-1220 (ISOFORMS 3/6)</scope>
    <source>
        <tissue>Placenta</tissue>
    </source>
</reference>
<reference key="11">
    <citation type="submission" date="1999-05" db="EMBL/GenBank/DDBJ databases">
        <title>Human partial CDS from CD34+ stem cells.</title>
        <authorList>
            <person name="Ye M."/>
            <person name="Zhang Q.-H."/>
            <person name="Zhou J."/>
            <person name="Shen Y."/>
            <person name="Wu X.-Y."/>
            <person name="Guan Z.Q."/>
            <person name="Wang L."/>
            <person name="Fan H.-Y."/>
            <person name="Mao Y.-F."/>
            <person name="Dai M."/>
            <person name="Huang Q.-H."/>
            <person name="Chen S.-J."/>
            <person name="Chen Z."/>
        </authorList>
    </citation>
    <scope>NUCLEOTIDE SEQUENCE [LARGE SCALE MRNA] OF 852-1220 (ISOFORM 8)</scope>
    <scope>NUCLEOTIDE SEQUENCE [LARGE SCALE MRNA] OF 899-1220 (ISOFORM 1)</scope>
    <source>
        <tissue>Blood</tissue>
    </source>
</reference>
<reference key="12">
    <citation type="journal article" date="1999" name="J. Cell Sci.">
        <title>Identification of the putative mammalian orthologue of Sec31P, a component of the COPII coat.</title>
        <authorList>
            <person name="Shugrue C.A."/>
            <person name="Kolen E.R."/>
            <person name="Peters H."/>
            <person name="Czernik A."/>
            <person name="Kaiser C."/>
            <person name="Matovcik L."/>
            <person name="Hubbard A.L."/>
            <person name="Gorelick F."/>
        </authorList>
    </citation>
    <scope>TISSUE SPECIFICITY</scope>
</reference>
<reference key="13">
    <citation type="journal article" date="2006" name="Cell">
        <title>Global, in vivo, and site-specific phosphorylation dynamics in signaling networks.</title>
        <authorList>
            <person name="Olsen J.V."/>
            <person name="Blagoev B."/>
            <person name="Gnad F."/>
            <person name="Macek B."/>
            <person name="Kumar C."/>
            <person name="Mortensen P."/>
            <person name="Mann M."/>
        </authorList>
    </citation>
    <scope>PHOSPHORYLATION [LARGE SCALE ANALYSIS] AT SER-527 AND SER-532</scope>
    <scope>IDENTIFICATION BY MASS SPECTROMETRY [LARGE SCALE ANALYSIS]</scope>
    <source>
        <tissue>Cervix carcinoma</tissue>
    </source>
</reference>
<reference key="14">
    <citation type="journal article" date="2006" name="Mol. Biol. Cell">
        <title>The Ca2+-binding protein ALG-2 is recruited to endoplasmic reticulum exit sites by Sec31A and stabilizes the localization of Sec31A.</title>
        <authorList>
            <person name="Yamasaki A."/>
            <person name="Tani K."/>
            <person name="Yamamoto A."/>
            <person name="Kitamura N."/>
            <person name="Komada M."/>
        </authorList>
    </citation>
    <scope>IDENTIFICATION BY MASS SPECTROMETRY</scope>
    <scope>INTERACTION WITH PDCD6 AND SEC13</scope>
    <scope>SUBCELLULAR LOCATION</scope>
</reference>
<reference key="15">
    <citation type="journal article" date="2006" name="Int. J. Cancer">
        <title>Fusion of the SEC31L1 and ALK genes in an inflammatory myofibroblastic tumor.</title>
        <authorList>
            <person name="Panagopoulos I."/>
            <person name="Nilsson T."/>
            <person name="Domanski H.A."/>
            <person name="Isaksson M."/>
            <person name="Lindblom P."/>
            <person name="Mertens F."/>
            <person name="Mandahl N."/>
        </authorList>
    </citation>
    <scope>CHROMOSOMAL TRANSLOCATION WITH ALK</scope>
</reference>
<reference key="16">
    <citation type="journal article" date="2007" name="Biochem. Biophys. Res. Commun.">
        <title>ALG-2 directly binds Sec31A and localizes at endoplasmic reticulum exit sites in a Ca2+-dependent manner.</title>
        <authorList>
            <person name="Shibata H."/>
            <person name="Suzuki H."/>
            <person name="Yoshida H."/>
            <person name="Maki M."/>
        </authorList>
    </citation>
    <scope>INTERACTION WITH PDCD6</scope>
</reference>
<reference key="17">
    <citation type="journal article" date="2007" name="J. Biol. Chem.">
        <title>Mammalian Sec16/p250 plays a role in membrane traffic from the endoplasmic reticulum.</title>
        <authorList>
            <person name="Iinuma T."/>
            <person name="Shiga A."/>
            <person name="Nakamoto K."/>
            <person name="O'Brien M.B."/>
            <person name="Aridor M."/>
            <person name="Arimitsu N."/>
            <person name="Tagaya M."/>
            <person name="Tani K."/>
        </authorList>
    </citation>
    <scope>SUBCELLULAR LOCATION</scope>
</reference>
<reference key="18">
    <citation type="journal article" date="2008" name="Proc. Natl. Acad. Sci. U.S.A.">
        <title>A quantitative atlas of mitotic phosphorylation.</title>
        <authorList>
            <person name="Dephoure N."/>
            <person name="Zhou C."/>
            <person name="Villen J."/>
            <person name="Beausoleil S.A."/>
            <person name="Bakalarski C.E."/>
            <person name="Elledge S.J."/>
            <person name="Gygi S.P."/>
        </authorList>
    </citation>
    <scope>PHOSPHORYLATION [LARGE SCALE ANALYSIS] AT SER-799 AND SER-1163</scope>
    <scope>IDENTIFICATION BY MASS SPECTROMETRY [LARGE SCALE ANALYSIS]</scope>
    <source>
        <tissue>Cervix carcinoma</tissue>
    </source>
</reference>
<reference key="19">
    <citation type="journal article" date="2009" name="Sci. Signal.">
        <title>Quantitative phosphoproteomic analysis of T cell receptor signaling reveals system-wide modulation of protein-protein interactions.</title>
        <authorList>
            <person name="Mayya V."/>
            <person name="Lundgren D.H."/>
            <person name="Hwang S.-I."/>
            <person name="Rezaul K."/>
            <person name="Wu L."/>
            <person name="Eng J.K."/>
            <person name="Rodionov V."/>
            <person name="Han D.K."/>
        </authorList>
    </citation>
    <scope>IDENTIFICATION BY MASS SPECTROMETRY [LARGE SCALE ANALYSIS]</scope>
    <source>
        <tissue>Leukemic T-cell</tissue>
    </source>
</reference>
<reference key="20">
    <citation type="journal article" date="2010" name="Sci. Signal.">
        <title>Quantitative phosphoproteomics reveals widespread full phosphorylation site occupancy during mitosis.</title>
        <authorList>
            <person name="Olsen J.V."/>
            <person name="Vermeulen M."/>
            <person name="Santamaria A."/>
            <person name="Kumar C."/>
            <person name="Miller M.L."/>
            <person name="Jensen L.J."/>
            <person name="Gnad F."/>
            <person name="Cox J."/>
            <person name="Jensen T.S."/>
            <person name="Nigg E.A."/>
            <person name="Brunak S."/>
            <person name="Mann M."/>
        </authorList>
    </citation>
    <scope>PHOSPHORYLATION [LARGE SCALE ANALYSIS] AT SER-799 AND THR-1161</scope>
    <scope>IDENTIFICATION BY MASS SPECTROMETRY [LARGE SCALE ANALYSIS]</scope>
    <source>
        <tissue>Cervix carcinoma</tissue>
    </source>
</reference>
<reference key="21">
    <citation type="journal article" date="2011" name="BMC Syst. Biol.">
        <title>Initial characterization of the human central proteome.</title>
        <authorList>
            <person name="Burkard T.R."/>
            <person name="Planyavsky M."/>
            <person name="Kaupe I."/>
            <person name="Breitwieser F.P."/>
            <person name="Buerckstuemmer T."/>
            <person name="Bennett K.L."/>
            <person name="Superti-Furga G."/>
            <person name="Colinge J."/>
        </authorList>
    </citation>
    <scope>IDENTIFICATION BY MASS SPECTROMETRY [LARGE SCALE ANALYSIS]</scope>
</reference>
<reference key="22">
    <citation type="journal article" date="2011" name="Sci. Signal.">
        <title>System-wide temporal characterization of the proteome and phosphoproteome of human embryonic stem cell differentiation.</title>
        <authorList>
            <person name="Rigbolt K.T."/>
            <person name="Prokhorova T.A."/>
            <person name="Akimov V."/>
            <person name="Henningsen J."/>
            <person name="Johansen P.T."/>
            <person name="Kratchmarova I."/>
            <person name="Kassem M."/>
            <person name="Mann M."/>
            <person name="Olsen J.V."/>
            <person name="Blagoev B."/>
        </authorList>
    </citation>
    <scope>PHOSPHORYLATION [LARGE SCALE ANALYSIS] AT SER-527 AND SER-799</scope>
    <scope>IDENTIFICATION BY MASS SPECTROMETRY [LARGE SCALE ANALYSIS]</scope>
</reference>
<reference key="23">
    <citation type="journal article" date="2012" name="Nature">
        <title>Ubiquitin-dependent regulation of COPII coat size and function.</title>
        <authorList>
            <person name="Jin L."/>
            <person name="Pahuja K.B."/>
            <person name="Wickliffe K.E."/>
            <person name="Gorur A."/>
            <person name="Baumgartel C."/>
            <person name="Schekman R."/>
            <person name="Rape M."/>
        </authorList>
    </citation>
    <scope>SUBCELLULAR LOCATION</scope>
    <scope>UBIQUITINATION AT LYS-647 AND LYS-1217</scope>
    <scope>MUTAGENESIS OF LYS-647 AND LYS-1217</scope>
    <scope>INTERACTION WITH KLHL12</scope>
</reference>
<reference key="24">
    <citation type="journal article" date="2012" name="Proc. Natl. Acad. Sci. U.S.A.">
        <title>N-terminal acetylome analyses and functional insights of the N-terminal acetyltransferase NatB.</title>
        <authorList>
            <person name="Van Damme P."/>
            <person name="Lasa M."/>
            <person name="Polevoda B."/>
            <person name="Gazquez C."/>
            <person name="Elosegui-Artola A."/>
            <person name="Kim D.S."/>
            <person name="De Juan-Pardo E."/>
            <person name="Demeyer K."/>
            <person name="Hole K."/>
            <person name="Larrea E."/>
            <person name="Timmerman E."/>
            <person name="Prieto J."/>
            <person name="Arnesen T."/>
            <person name="Sherman F."/>
            <person name="Gevaert K."/>
            <person name="Aldabe R."/>
        </authorList>
    </citation>
    <scope>IDENTIFICATION BY MASS SPECTROMETRY [LARGE SCALE ANALYSIS]</scope>
</reference>
<reference key="25">
    <citation type="journal article" date="2013" name="J. Proteome Res.">
        <title>Toward a comprehensive characterization of a human cancer cell phosphoproteome.</title>
        <authorList>
            <person name="Zhou H."/>
            <person name="Di Palma S."/>
            <person name="Preisinger C."/>
            <person name="Peng M."/>
            <person name="Polat A.N."/>
            <person name="Heck A.J."/>
            <person name="Mohammed S."/>
        </authorList>
    </citation>
    <scope>PHOSPHORYLATION [LARGE SCALE ANALYSIS] AT SER-527; SER-799; THR-1161 AND SER-1163</scope>
    <scope>IDENTIFICATION BY MASS SPECTROMETRY [LARGE SCALE ANALYSIS]</scope>
    <source>
        <tissue>Cervix carcinoma</tissue>
        <tissue>Erythroleukemia</tissue>
    </source>
</reference>
<reference key="26">
    <citation type="journal article" date="2014" name="EMBO J.">
        <title>Leucine-rich repeat kinase 2 regulates Sec16A at ER exit sites to allow ER-Golgi export.</title>
        <authorList>
            <person name="Cho H.J."/>
            <person name="Yu J."/>
            <person name="Xie C."/>
            <person name="Rudrabhatla P."/>
            <person name="Chen X."/>
            <person name="Wu J."/>
            <person name="Parisiadou L."/>
            <person name="Liu G."/>
            <person name="Sun L."/>
            <person name="Ma B."/>
            <person name="Ding J."/>
            <person name="Liu Z."/>
            <person name="Cai H."/>
        </authorList>
    </citation>
    <scope>SUBCELLULAR LOCATION</scope>
</reference>
<reference key="27">
    <citation type="journal article" date="2014" name="J. Proteomics">
        <title>An enzyme assisted RP-RPLC approach for in-depth analysis of human liver phosphoproteome.</title>
        <authorList>
            <person name="Bian Y."/>
            <person name="Song C."/>
            <person name="Cheng K."/>
            <person name="Dong M."/>
            <person name="Wang F."/>
            <person name="Huang J."/>
            <person name="Sun D."/>
            <person name="Wang L."/>
            <person name="Ye M."/>
            <person name="Zou H."/>
        </authorList>
    </citation>
    <scope>PHOSPHORYLATION [LARGE SCALE ANALYSIS] AT SER-527; SER-799 AND SER-1163</scope>
    <scope>IDENTIFICATION BY MASS SPECTROMETRY [LARGE SCALE ANALYSIS]</scope>
    <source>
        <tissue>Liver</tissue>
    </source>
</reference>
<reference key="28">
    <citation type="journal article" date="2015" name="Proteomics">
        <title>N-terminome analysis of the human mitochondrial proteome.</title>
        <authorList>
            <person name="Vaca Jacome A.S."/>
            <person name="Rabilloud T."/>
            <person name="Schaeffer-Reiss C."/>
            <person name="Rompais M."/>
            <person name="Ayoub D."/>
            <person name="Lane L."/>
            <person name="Bairoch A."/>
            <person name="Van Dorsselaer A."/>
            <person name="Carapito C."/>
        </authorList>
    </citation>
    <scope>IDENTIFICATION BY MASS SPECTROMETRY [LARGE SCALE ANALYSIS]</scope>
</reference>
<reference key="29">
    <citation type="journal article" date="2016" name="Cell">
        <title>Two distinct types of E3 ligases work in unison to regulate substrate ubiquitylation.</title>
        <authorList>
            <person name="Scott D.C."/>
            <person name="Rhee D.Y."/>
            <person name="Duda D.M."/>
            <person name="Kelsall I.R."/>
            <person name="Olszewski J.L."/>
            <person name="Paulo J.A."/>
            <person name="de Jong A."/>
            <person name="Ovaa H."/>
            <person name="Alpi A.F."/>
            <person name="Harper J.W."/>
            <person name="Schulman B.A."/>
        </authorList>
    </citation>
    <scope>UBIQUITINATION</scope>
</reference>
<reference key="30">
    <citation type="journal article" date="2016" name="Cell">
        <title>Regulation of the CUL3 ubiquitin ligase by a calcium-dependent co-adaptor.</title>
        <authorList>
            <person name="McGourty C.A."/>
            <person name="Akopian D."/>
            <person name="Walsh C."/>
            <person name="Gorur A."/>
            <person name="Werner A."/>
            <person name="Schekman R."/>
            <person name="Bautista D."/>
            <person name="Rape M."/>
        </authorList>
    </citation>
    <scope>UBIQUITINATION</scope>
    <scope>SUBCELLULAR LOCATION</scope>
    <scope>INTERACTION WITH PDCD6</scope>
</reference>
<reference key="31">
    <citation type="journal article" date="2017" name="J. Cell Biol.">
        <title>TANGO1 recruits Sec16 to coordinately organize ER exit sites for efficient secretion.</title>
        <authorList>
            <person name="Maeda M."/>
            <person name="Katada T."/>
            <person name="Saito K."/>
        </authorList>
    </citation>
    <scope>SUBCELLULAR LOCATION</scope>
</reference>
<reference key="32">
    <citation type="journal article" date="2019" name="J. Med. Genet.">
        <title>SEC31A mutation affects ER homeostasis, causing a neurological syndrome.</title>
        <authorList>
            <person name="Halperin D."/>
            <person name="Kadir R."/>
            <person name="Perez Y."/>
            <person name="Drabkin M."/>
            <person name="Yogev Y."/>
            <person name="Wormser O."/>
            <person name="Berman E.M."/>
            <person name="Eremenko E."/>
            <person name="Rotblat B."/>
            <person name="Shorer Z."/>
            <person name="Gradstein L."/>
            <person name="Shelef I."/>
            <person name="Birk R."/>
            <person name="Abdu U."/>
            <person name="Flusser H."/>
            <person name="Birk O.S."/>
        </authorList>
    </citation>
    <scope>INVOLVEMENT IN HLBKS</scope>
</reference>
<reference evidence="23" key="33">
    <citation type="journal article" date="2015" name="Int. J. Mol. Sci.">
        <title>Structural analysis of the complex between penta-EF-hand ALG-2 protein and Sec31A peptide reveals a novel target recognition mechanism of ALG-2.</title>
        <authorList>
            <person name="Takahashi T."/>
            <person name="Kojima K."/>
            <person name="Zhang W."/>
            <person name="Sasaki K."/>
            <person name="Ito M."/>
            <person name="Suzuki H."/>
            <person name="Kawasaki M."/>
            <person name="Wakatsuki S."/>
            <person name="Takahara T."/>
            <person name="Shibata H."/>
            <person name="Maki M."/>
        </authorList>
    </citation>
    <scope>X-RAY CRYSTALLOGRAPHY (2.36 ANGSTROMS) OF 837-848 IN COMPLEX WITH PDCD6</scope>
    <scope>DOMAIN</scope>
</reference>
<keyword id="KW-0002">3D-structure</keyword>
<keyword id="KW-0025">Alternative splicing</keyword>
<keyword id="KW-0160">Chromosomal rearrangement</keyword>
<keyword id="KW-0963">Cytoplasm</keyword>
<keyword id="KW-0968">Cytoplasmic vesicle</keyword>
<keyword id="KW-0256">Endoplasmic reticulum</keyword>
<keyword id="KW-0931">ER-Golgi transport</keyword>
<keyword id="KW-1017">Isopeptide bond</keyword>
<keyword id="KW-0472">Membrane</keyword>
<keyword id="KW-0597">Phosphoprotein</keyword>
<keyword id="KW-0653">Protein transport</keyword>
<keyword id="KW-1267">Proteomics identification</keyword>
<keyword id="KW-0656">Proto-oncogene</keyword>
<keyword id="KW-1185">Reference proteome</keyword>
<keyword id="KW-0677">Repeat</keyword>
<keyword id="KW-0813">Transport</keyword>
<keyword id="KW-0832">Ubl conjugation</keyword>
<keyword id="KW-0853">WD repeat</keyword>
<comment type="function">
    <text evidence="2 6">Component of the coat protein complex II (COPII) which promotes the formation of transport vesicles from the endoplasmic reticulum (ER) (PubMed:10788476). The coat has two main functions, the physical deformation of the endoplasmic reticulum membrane into vesicles and the selection of cargo molecules (By similarity).</text>
</comment>
<comment type="subunit">
    <text evidence="1 7 8 10 12">COPII is composed of at least 5 proteins: the SEC23/24 complex, the SEC13/31 complex and SAR1. SEC13 and SEC31 make a 2:2 tetramer that forms the edge element of the COPII outer coat. The tetramer self-assembles in multiple copies to form the complete polyhedral cage. Interacts (via WD 8) with SEC13 (By similarity). Interacts with PDCD6; interaction takes place in response to cytosolic calcium increase and leads to bridge together the BCR(KLHL12) complex and SEC31A, leading to monoubiquitination (PubMed:16957052, PubMed:17196169, PubMed:25667979, PubMed:27716508). Interacts with KLHL12.</text>
</comment>
<comment type="interaction">
    <interactant intactId="EBI-1767898">
        <id>O94979</id>
    </interactant>
    <interactant intactId="EBI-352915">
        <id>O75340</id>
        <label>PDCD6</label>
    </interactant>
    <organismsDiffer>false</organismsDiffer>
    <experiments>7</experiments>
</comment>
<comment type="interaction">
    <interactant intactId="EBI-1767898">
        <id>O94979</id>
    </interactant>
    <interactant intactId="EBI-307352">
        <id>Q04864</id>
        <label>REL</label>
    </interactant>
    <organismsDiffer>false</organismsDiffer>
    <experiments>3</experiments>
</comment>
<comment type="interaction">
    <interactant intactId="EBI-1767898">
        <id>O94979</id>
    </interactant>
    <interactant intactId="EBI-949287">
        <id>Q96KG9</id>
        <label>SCYL1</label>
    </interactant>
    <organismsDiffer>false</organismsDiffer>
    <experiments>5</experiments>
</comment>
<comment type="interaction">
    <interactant intactId="EBI-1767898">
        <id>O94979</id>
    </interactant>
    <interactant intactId="EBI-1046596">
        <id>P55735</id>
        <label>SEC13</label>
    </interactant>
    <organismsDiffer>false</organismsDiffer>
    <experiments>7</experiments>
</comment>
<comment type="interaction">
    <interactant intactId="EBI-15564399">
        <id>O94979-1</id>
    </interactant>
    <interactant intactId="EBI-10045850">
        <id>P55735-1</id>
        <label>SEC13</label>
    </interactant>
    <organismsDiffer>false</organismsDiffer>
    <experiments>9</experiments>
</comment>
<comment type="interaction">
    <interactant intactId="EBI-17482477">
        <id>O94979-2</id>
    </interactant>
    <interactant intactId="EBI-750641">
        <id>Q5TD97</id>
        <label>FHL5</label>
    </interactant>
    <organismsDiffer>false</organismsDiffer>
    <experiments>3</experiments>
</comment>
<comment type="subcellular location">
    <subcellularLocation>
        <location evidence="1">Cytoplasm</location>
    </subcellularLocation>
    <subcellularLocation>
        <location evidence="6 7 10 14">Cytoplasmic vesicle</location>
        <location evidence="6 7 10 14">COPII-coated vesicle membrane</location>
        <topology>Peripheral membrane protein</topology>
        <orientation>Cytoplasmic side</orientation>
    </subcellularLocation>
    <subcellularLocation>
        <location evidence="1">Endoplasmic reticulum membrane</location>
        <topology evidence="1">Peripheral membrane protein</topology>
    </subcellularLocation>
    <subcellularLocation>
        <location evidence="9">Cytoplasm</location>
        <location evidence="9">Cytosol</location>
    </subcellularLocation>
    <text evidence="2 9 11 15">Associates with membranes in a GTP-dependent manner (By similarity). Localizes to endoplasmic reticulum exit sites (ERES), also known as transitional endoplasmic reticulum (tER) (PubMed:17428803, PubMed:25201882, PubMed:28442536).</text>
</comment>
<comment type="alternative products">
    <event type="alternative splicing"/>
    <isoform>
        <id>O94979-1</id>
        <name>1</name>
        <sequence type="displayed"/>
    </isoform>
    <isoform>
        <id>O94979-2</id>
        <name>2</name>
        <sequence type="described" ref="VSP_026750"/>
    </isoform>
    <isoform>
        <id>O94979-3</id>
        <name>3</name>
        <sequence type="described" ref="VSP_026748 VSP_026749"/>
    </isoform>
    <isoform>
        <id>O94979-4</id>
        <name>4</name>
        <sequence type="described" ref="VSP_026744"/>
    </isoform>
    <isoform>
        <id>O94979-5</id>
        <name>5</name>
        <sequence type="described" ref="VSP_026745 VSP_026746"/>
    </isoform>
    <isoform>
        <id>O94979-6</id>
        <name>6</name>
        <sequence type="described" ref="VSP_026744 VSP_026748 VSP_026749"/>
    </isoform>
    <isoform>
        <id>O94979-7</id>
        <name>7</name>
        <sequence type="described" ref="VSP_026742 VSP_026743 VSP_026744 VSP_026747 VSP_026750"/>
    </isoform>
    <isoform>
        <id>O94979-8</id>
        <name>8</name>
        <sequence type="described" ref="VSP_026751"/>
    </isoform>
    <isoform>
        <id>O94979-9</id>
        <name>9</name>
        <sequence type="described" ref="VSP_044602 VSP_026750"/>
    </isoform>
    <isoform>
        <id>O94979-10</id>
        <name>10</name>
        <sequence type="described" ref="VSP_026744 VSP_026750"/>
    </isoform>
</comment>
<comment type="tissue specificity">
    <text evidence="5 6">Abundantly and ubiquitously expressed.</text>
</comment>
<comment type="domain">
    <text evidence="12">The ALG-2-binding site motif-2 (ABS-2) contains a PXPGF sequence that binds hydrophobic pocket 3 of PDCD6.</text>
</comment>
<comment type="PTM">
    <text evidence="10 13">Monoubiquitinated by the BCR(KLHL12) E3 ubiquitin ligase complex, leading to regulate the size of COPII coats.</text>
</comment>
<comment type="disease" evidence="16">
    <disease id="DI-05697">
        <name>Halperin-Birk syndrome</name>
        <acronym>HLBKS</acronym>
        <description>An autosomal recessive, congenital neurodevelopmental disorder characterized by intrauterine growth retardation, microcephaly, marked developmental delay, spastic quadriplegia with profound contractures, pseudobulbar palsy with recurrent aspirations, epilepsy, dysmorphism, neurosensory deafness, optic nerve atrophy with no eye fixation, and death in early childhood. Brain imaging shows semilobar holoprosencephaly and agenesis of corpus callosum.</description>
        <dbReference type="MIM" id="618651"/>
    </disease>
    <text>The disease may be caused by variants affecting the gene represented in this entry.</text>
</comment>
<comment type="disease">
    <text>A chromosomal aberration involving SEC31A is associated with inflammatory myofibroblastic tumors (IMTs). Translocation t(2;4)(p23;q21) with ALK.</text>
</comment>
<comment type="similarity">
    <text evidence="22">Belongs to the WD repeat SEC31 family.</text>
</comment>
<comment type="sequence caution" evidence="22">
    <conflict type="frameshift">
        <sequence resource="EMBL-CDS" id="AAF28953"/>
    </conflict>
</comment>
<comment type="sequence caution" evidence="22">
    <conflict type="frameshift">
        <sequence resource="EMBL-CDS" id="AAF29012"/>
    </conflict>
</comment>
<comment type="sequence caution" evidence="22">
    <conflict type="erroneous termination">
        <sequence resource="EMBL-CDS" id="CAI45995"/>
    </conflict>
    <text>Truncated C-terminus.</text>
</comment>
<proteinExistence type="evidence at protein level"/>
<organism>
    <name type="scientific">Homo sapiens</name>
    <name type="common">Human</name>
    <dbReference type="NCBI Taxonomy" id="9606"/>
    <lineage>
        <taxon>Eukaryota</taxon>
        <taxon>Metazoa</taxon>
        <taxon>Chordata</taxon>
        <taxon>Craniata</taxon>
        <taxon>Vertebrata</taxon>
        <taxon>Euteleostomi</taxon>
        <taxon>Mammalia</taxon>
        <taxon>Eutheria</taxon>
        <taxon>Euarchontoglires</taxon>
        <taxon>Primates</taxon>
        <taxon>Haplorrhini</taxon>
        <taxon>Catarrhini</taxon>
        <taxon>Hominidae</taxon>
        <taxon>Homo</taxon>
    </lineage>
</organism>
<protein>
    <recommendedName>
        <fullName>Protein transport protein Sec31A</fullName>
    </recommendedName>
    <alternativeName>
        <fullName>ABP125</fullName>
    </alternativeName>
    <alternativeName>
        <fullName>ABP130</fullName>
    </alternativeName>
    <alternativeName>
        <fullName>SEC31-like protein 1</fullName>
    </alternativeName>
    <alternativeName>
        <fullName>SEC31-related protein A</fullName>
    </alternativeName>
    <alternativeName>
        <fullName>Web1-like protein</fullName>
    </alternativeName>
</protein>
<sequence length="1220" mass="133015">MKLKEVDRTAMQAWSPAQNHPIYLATGTSAQQLDATFSTNASLEIFELDLSDPSLDMKSCATFSSSHRYHKLIWGPYKMDSKGDVSGVLIAGGENGNIILYDPSKIIAGDKEVVIAQNDKHTGPVRALDVNIFQTNLVASGANESEIYIWDLNNFATPMTPGAKTQPPEDISCIAWNRQVQHILASASPSGRATVWDLRKNEPIIKVSDHSNRMHCSGLAWHPDVATQMVLASEDDRLPVIQMWDLRFASSPLRVLENHARGILAIAWSMADPELLLSCGKDAKILCSNPNTGEVLYELPTNTQWCFDIQWCPRNPAVLSAASFDGRISVYSIMGGSTDGLRQKQVDKLSSSFGNLDPFGTGQPLPPLQIPQQTAQHSIVLPLKKPPKWIRRPVGASFSFGGKLVTFENVRMPSHQGAEQQQQQHHVFISQVVTEKEFLSRSDQLQQAVQSQGFINYCQKKIDASQTEFEKNVWSFLKVNFEDDSRGKYLELLGYRKEDLGKKIALALNKVDGANVALKDSDQVAQSDGEESPAAEEQLLGEHIKEEKEESEFLPSSGGTFNISVSGDIDGLITQALLTGNFESAVDLCLHDNRMADAIILAIAGGQELLARTQKKYFAKSQSKITRLITAVVMKNWKEIVESCDLKNWREALAAVLTYAKPDEFSALCDLLGTRLENEGDSLLQTQACLCYICAGNVEKLVACWTKAQDGSHPLSLQDLIEKVVILRKAVQLTQAMDTSTVGVLLAAKMSQYANLLAAQGSIAAALAFLPDNTNQPNIMQLRDRLCRAQGEPVAGHESPKIPYEKQQLPKGRPGPVAGHHQMPRVQTQQYYPHGENPPPPGFIMHGNVNPNAAGQLPTSPGHMHTQVPPYPQPQPYQPAQPYPFGTGGSAMYRPQQPVAPPTSNAYPNTPYISSASSYTGQSQLYAAQHQASSPTSSPATSFPPPPSSGASFQHGGPGAPPSSSAYALPPGTTGTLPAASELPASQRTGPQNGWNDPPALNRVPKKKKMPENFMPPVPITSPIMNPLGDPQSQMLQQQPSAPVPLSSQSSFPQPHLPGGQPFHGVQQPLGQTGMPPSFSKPNIEGAPGAPIGNTFQHVQSLPTKKITKKPIPDEHLILKTTFEDLIQRCLSSATDPQTKRKLDDASKRLEFLYDKLREQTLSPTITSGLHNIARSIETRNYSEGLTMHTHIVSTSNFSETSAFMPVLKVVLTQANKLGV</sequence>
<accession>O94979</accession>
<accession>B4DIW6</accession>
<accession>B7ZKZ7</accession>
<accession>B7ZL00</accession>
<accession>H7C2W3</accession>
<accession>Q17RR5</accession>
<accession>Q5H9P6</accession>
<accession>Q5XG74</accession>
<accession>Q659G7</accession>
<accession>Q6ZU90</accession>
<accession>Q7LCX9</accession>
<accession>Q86TJ0</accession>
<accession>Q8IZH4</accession>
<accession>Q9P048</accession>
<accession>Q9P0A6</accession>
<accession>Q9UM05</accession>
<accession>Q9UM06</accession>
<dbReference type="EMBL" id="AF139184">
    <property type="protein sequence ID" value="AAF67836.1"/>
    <property type="molecule type" value="mRNA"/>
</dbReference>
<dbReference type="EMBL" id="AB018358">
    <property type="protein sequence ID" value="BAA84923.1"/>
    <property type="molecule type" value="mRNA"/>
</dbReference>
<dbReference type="EMBL" id="AB018359">
    <property type="protein sequence ID" value="BAA84924.1"/>
    <property type="molecule type" value="mRNA"/>
</dbReference>
<dbReference type="EMBL" id="AB020712">
    <property type="protein sequence ID" value="BAA74928.2"/>
    <property type="molecule type" value="mRNA"/>
</dbReference>
<dbReference type="EMBL" id="AK125897">
    <property type="protein sequence ID" value="BAC86336.1"/>
    <property type="molecule type" value="mRNA"/>
</dbReference>
<dbReference type="EMBL" id="AK295810">
    <property type="protein sequence ID" value="BAG58628.1"/>
    <property type="molecule type" value="mRNA"/>
</dbReference>
<dbReference type="EMBL" id="AL049463">
    <property type="protein sequence ID" value="CAH56418.1"/>
    <property type="molecule type" value="mRNA"/>
</dbReference>
<dbReference type="EMBL" id="CR933696">
    <property type="protein sequence ID" value="CAI45995.1"/>
    <property type="status" value="ALT_SEQ"/>
    <property type="molecule type" value="mRNA"/>
</dbReference>
<dbReference type="EMBL" id="AC021105">
    <property type="status" value="NOT_ANNOTATED_CDS"/>
    <property type="molecule type" value="Genomic_DNA"/>
</dbReference>
<dbReference type="EMBL" id="AC108469">
    <property type="status" value="NOT_ANNOTATED_CDS"/>
    <property type="molecule type" value="Genomic_DNA"/>
</dbReference>
<dbReference type="EMBL" id="CH471057">
    <property type="protein sequence ID" value="EAX05908.1"/>
    <property type="molecule type" value="Genomic_DNA"/>
</dbReference>
<dbReference type="EMBL" id="BC047883">
    <property type="protein sequence ID" value="AAH47883.1"/>
    <property type="molecule type" value="mRNA"/>
</dbReference>
<dbReference type="EMBL" id="BC084583">
    <property type="protein sequence ID" value="AAH84583.1"/>
    <property type="molecule type" value="mRNA"/>
</dbReference>
<dbReference type="EMBL" id="BC117221">
    <property type="protein sequence ID" value="AAI17222.1"/>
    <property type="molecule type" value="mRNA"/>
</dbReference>
<dbReference type="EMBL" id="BC143489">
    <property type="protein sequence ID" value="AAI43490.1"/>
    <property type="molecule type" value="mRNA"/>
</dbReference>
<dbReference type="EMBL" id="BC143491">
    <property type="protein sequence ID" value="AAI43492.1"/>
    <property type="molecule type" value="mRNA"/>
</dbReference>
<dbReference type="EMBL" id="BC143492">
    <property type="protein sequence ID" value="AAI43493.1"/>
    <property type="molecule type" value="mRNA"/>
</dbReference>
<dbReference type="EMBL" id="AY137583">
    <property type="protein sequence ID" value="AAN15221.1"/>
    <property type="molecule type" value="mRNA"/>
</dbReference>
<dbReference type="EMBL" id="AF161393">
    <property type="protein sequence ID" value="AAF28953.1"/>
    <property type="status" value="ALT_FRAME"/>
    <property type="molecule type" value="mRNA"/>
</dbReference>
<dbReference type="EMBL" id="AF161452">
    <property type="protein sequence ID" value="AAF29012.1"/>
    <property type="status" value="ALT_FRAME"/>
    <property type="molecule type" value="mRNA"/>
</dbReference>
<dbReference type="CCDS" id="CCDS3596.1">
    <molecule id="O94979-1"/>
</dbReference>
<dbReference type="CCDS" id="CCDS3597.1">
    <molecule id="O94979-4"/>
</dbReference>
<dbReference type="CCDS" id="CCDS43244.1">
    <molecule id="O94979-3"/>
</dbReference>
<dbReference type="CCDS" id="CCDS47088.1">
    <molecule id="O94979-2"/>
</dbReference>
<dbReference type="CCDS" id="CCDS54773.1">
    <molecule id="O94979-9"/>
</dbReference>
<dbReference type="CCDS" id="CCDS75155.1">
    <molecule id="O94979-6"/>
</dbReference>
<dbReference type="CCDS" id="CCDS75156.1">
    <molecule id="O94979-10"/>
</dbReference>
<dbReference type="RefSeq" id="NP_001070674.1">
    <molecule id="O94979-3"/>
    <property type="nucleotide sequence ID" value="NM_001077206.4"/>
</dbReference>
<dbReference type="RefSeq" id="NP_001070675.1">
    <molecule id="O94979-1"/>
    <property type="nucleotide sequence ID" value="NM_001077207.4"/>
</dbReference>
<dbReference type="RefSeq" id="NP_001070676.1">
    <molecule id="O94979-2"/>
    <property type="nucleotide sequence ID" value="NM_001077208.4"/>
</dbReference>
<dbReference type="RefSeq" id="NP_001177978.1">
    <molecule id="O94979-9"/>
    <property type="nucleotide sequence ID" value="NM_001191049.2"/>
</dbReference>
<dbReference type="RefSeq" id="NP_001287673.1">
    <molecule id="O94979-6"/>
    <property type="nucleotide sequence ID" value="NM_001300744.3"/>
</dbReference>
<dbReference type="RefSeq" id="NP_001287674.1">
    <molecule id="O94979-10"/>
    <property type="nucleotide sequence ID" value="NM_001300745.3"/>
</dbReference>
<dbReference type="RefSeq" id="NP_001305048.1">
    <molecule id="O94979-2"/>
    <property type="nucleotide sequence ID" value="NM_001318119.2"/>
</dbReference>
<dbReference type="RefSeq" id="NP_001305049.1">
    <molecule id="O94979-1"/>
    <property type="nucleotide sequence ID" value="NM_001318120.2"/>
</dbReference>
<dbReference type="RefSeq" id="NP_001387086.1">
    <molecule id="O94979-8"/>
    <property type="nucleotide sequence ID" value="NM_001400157.1"/>
</dbReference>
<dbReference type="RefSeq" id="NP_001387087.1">
    <molecule id="O94979-8"/>
    <property type="nucleotide sequence ID" value="NM_001400158.1"/>
</dbReference>
<dbReference type="RefSeq" id="NP_001387088.1">
    <molecule id="O94979-8"/>
    <property type="nucleotide sequence ID" value="NM_001400159.1"/>
</dbReference>
<dbReference type="RefSeq" id="NP_001387093.1">
    <molecule id="O94979-1"/>
    <property type="nucleotide sequence ID" value="NM_001400164.1"/>
</dbReference>
<dbReference type="RefSeq" id="NP_001387095.1">
    <molecule id="O94979-1"/>
    <property type="nucleotide sequence ID" value="NM_001400166.1"/>
</dbReference>
<dbReference type="RefSeq" id="NP_001387119.1">
    <molecule id="O94979-2"/>
    <property type="nucleotide sequence ID" value="NM_001400190.1"/>
</dbReference>
<dbReference type="RefSeq" id="NP_001387120.1">
    <molecule id="O94979-2"/>
    <property type="nucleotide sequence ID" value="NM_001400191.1"/>
</dbReference>
<dbReference type="RefSeq" id="NP_001387122.1">
    <molecule id="O94979-2"/>
    <property type="nucleotide sequence ID" value="NM_001400193.1"/>
</dbReference>
<dbReference type="RefSeq" id="NP_001387136.1">
    <molecule id="O94979-4"/>
    <property type="nucleotide sequence ID" value="NM_001400207.1"/>
</dbReference>
<dbReference type="RefSeq" id="NP_001387138.1">
    <molecule id="O94979-4"/>
    <property type="nucleotide sequence ID" value="NM_001400209.1"/>
</dbReference>
<dbReference type="RefSeq" id="NP_001387142.1">
    <molecule id="O94979-10"/>
    <property type="nucleotide sequence ID" value="NM_001400213.1"/>
</dbReference>
<dbReference type="RefSeq" id="NP_001387146.1">
    <molecule id="O94979-3"/>
    <property type="nucleotide sequence ID" value="NM_001400217.1"/>
</dbReference>
<dbReference type="RefSeq" id="NP_001387152.1">
    <molecule id="O94979-6"/>
    <property type="nucleotide sequence ID" value="NM_001400223.1"/>
</dbReference>
<dbReference type="RefSeq" id="NP_057295.2">
    <molecule id="O94979-4"/>
    <property type="nucleotide sequence ID" value="NM_016211.4"/>
</dbReference>
<dbReference type="PDB" id="3WXA">
    <property type="method" value="X-ray"/>
    <property type="resolution" value="2.36 A"/>
    <property type="chains" value="C/D=837-848"/>
</dbReference>
<dbReference type="PDB" id="7SUL">
    <property type="method" value="X-ray"/>
    <property type="resolution" value="2.40 A"/>
    <property type="chains" value="A/B/C/D=1-338"/>
</dbReference>
<dbReference type="PDBsum" id="3WXA"/>
<dbReference type="PDBsum" id="7SUL"/>
<dbReference type="SMR" id="O94979"/>
<dbReference type="BioGRID" id="116539">
    <property type="interactions" value="240"/>
</dbReference>
<dbReference type="ComplexPortal" id="CPX-2360">
    <property type="entry name" value="COPII vesicle coat complex"/>
</dbReference>
<dbReference type="DIP" id="DIP-40438N"/>
<dbReference type="FunCoup" id="O94979">
    <property type="interactions" value="3708"/>
</dbReference>
<dbReference type="IntAct" id="O94979">
    <property type="interactions" value="84"/>
</dbReference>
<dbReference type="MINT" id="O94979"/>
<dbReference type="STRING" id="9606.ENSP00000378721"/>
<dbReference type="TCDB" id="3.A.5.9.1">
    <property type="family name" value="the general secretory pathway (sec) family"/>
</dbReference>
<dbReference type="GlyCosmos" id="O94979">
    <property type="glycosylation" value="21 sites, 2 glycans"/>
</dbReference>
<dbReference type="GlyGen" id="O94979">
    <property type="glycosylation" value="27 sites, 3 O-linked glycans (27 sites)"/>
</dbReference>
<dbReference type="iPTMnet" id="O94979"/>
<dbReference type="MetOSite" id="O94979"/>
<dbReference type="PhosphoSitePlus" id="O94979"/>
<dbReference type="SwissPalm" id="O94979"/>
<dbReference type="BioMuta" id="SEC31A"/>
<dbReference type="jPOST" id="O94979"/>
<dbReference type="MassIVE" id="O94979"/>
<dbReference type="PaxDb" id="9606-ENSP00000378721"/>
<dbReference type="PeptideAtlas" id="O94979"/>
<dbReference type="ProteomicsDB" id="45124"/>
<dbReference type="ProteomicsDB" id="50595">
    <molecule id="O94979-1"/>
</dbReference>
<dbReference type="ProteomicsDB" id="50596">
    <molecule id="O94979-2"/>
</dbReference>
<dbReference type="ProteomicsDB" id="50597">
    <molecule id="O94979-3"/>
</dbReference>
<dbReference type="ProteomicsDB" id="50598">
    <molecule id="O94979-4"/>
</dbReference>
<dbReference type="ProteomicsDB" id="50599">
    <molecule id="O94979-5"/>
</dbReference>
<dbReference type="ProteomicsDB" id="50600">
    <molecule id="O94979-6"/>
</dbReference>
<dbReference type="ProteomicsDB" id="50601">
    <molecule id="O94979-7"/>
</dbReference>
<dbReference type="ProteomicsDB" id="50602">
    <molecule id="O94979-8"/>
</dbReference>
<dbReference type="ProteomicsDB" id="7204"/>
<dbReference type="Pumba" id="O94979"/>
<dbReference type="Antibodypedia" id="1692">
    <property type="antibodies" value="143 antibodies from 24 providers"/>
</dbReference>
<dbReference type="DNASU" id="22872"/>
<dbReference type="Ensembl" id="ENST00000311785.11">
    <molecule id="O94979-3"/>
    <property type="protein sequence ID" value="ENSP00000309070.7"/>
    <property type="gene ID" value="ENSG00000138674.17"/>
</dbReference>
<dbReference type="Ensembl" id="ENST00000348405.8">
    <molecule id="O94979-4"/>
    <property type="protein sequence ID" value="ENSP00000337602.5"/>
    <property type="gene ID" value="ENSG00000138674.17"/>
</dbReference>
<dbReference type="Ensembl" id="ENST00000355196.6">
    <molecule id="O94979-1"/>
    <property type="protein sequence ID" value="ENSP00000347329.2"/>
    <property type="gene ID" value="ENSG00000138674.17"/>
</dbReference>
<dbReference type="Ensembl" id="ENST00000395310.7">
    <molecule id="O94979-1"/>
    <property type="protein sequence ID" value="ENSP00000378721.2"/>
    <property type="gene ID" value="ENSG00000138674.17"/>
</dbReference>
<dbReference type="Ensembl" id="ENST00000443462.6">
    <molecule id="O94979-9"/>
    <property type="protein sequence ID" value="ENSP00000408027.2"/>
    <property type="gene ID" value="ENSG00000138674.17"/>
</dbReference>
<dbReference type="Ensembl" id="ENST00000448323.5">
    <molecule id="O94979-1"/>
    <property type="protein sequence ID" value="ENSP00000400926.1"/>
    <property type="gene ID" value="ENSG00000138674.17"/>
</dbReference>
<dbReference type="Ensembl" id="ENST00000500777.6">
    <molecule id="O94979-6"/>
    <property type="protein sequence ID" value="ENSP00000421464.1"/>
    <property type="gene ID" value="ENSG00000138674.17"/>
</dbReference>
<dbReference type="Ensembl" id="ENST00000505984.5">
    <molecule id="O94979-10"/>
    <property type="protein sequence ID" value="ENSP00000424451.1"/>
    <property type="gene ID" value="ENSG00000138674.17"/>
</dbReference>
<dbReference type="Ensembl" id="ENST00000508502.5">
    <molecule id="O94979-2"/>
    <property type="protein sequence ID" value="ENSP00000424635.1"/>
    <property type="gene ID" value="ENSG00000138674.17"/>
</dbReference>
<dbReference type="Ensembl" id="ENST00000509142.5">
    <molecule id="O94979-3"/>
    <property type="protein sequence ID" value="ENSP00000426569.1"/>
    <property type="gene ID" value="ENSG00000138674.17"/>
</dbReference>
<dbReference type="Ensembl" id="ENST00000513858.5">
    <molecule id="O94979-6"/>
    <property type="protein sequence ID" value="ENSP00000426886.1"/>
    <property type="gene ID" value="ENSG00000138674.17"/>
</dbReference>
<dbReference type="GeneID" id="22872"/>
<dbReference type="KEGG" id="hsa:22872"/>
<dbReference type="MANE-Select" id="ENST00000395310.7">
    <property type="protein sequence ID" value="ENSP00000378721.2"/>
    <property type="RefSeq nucleotide sequence ID" value="NM_001077207.4"/>
    <property type="RefSeq protein sequence ID" value="NP_001070675.1"/>
</dbReference>
<dbReference type="UCSC" id="uc003hnf.3">
    <molecule id="O94979-1"/>
    <property type="organism name" value="human"/>
</dbReference>
<dbReference type="AGR" id="HGNC:17052"/>
<dbReference type="CTD" id="22872"/>
<dbReference type="DisGeNET" id="22872"/>
<dbReference type="GeneCards" id="SEC31A"/>
<dbReference type="HGNC" id="HGNC:17052">
    <property type="gene designation" value="SEC31A"/>
</dbReference>
<dbReference type="HPA" id="ENSG00000138674">
    <property type="expression patterns" value="Low tissue specificity"/>
</dbReference>
<dbReference type="MalaCards" id="SEC31A"/>
<dbReference type="MIM" id="610257">
    <property type="type" value="gene"/>
</dbReference>
<dbReference type="MIM" id="618651">
    <property type="type" value="phenotype"/>
</dbReference>
<dbReference type="neXtProt" id="NX_O94979"/>
<dbReference type="OpenTargets" id="ENSG00000138674"/>
<dbReference type="PharmGKB" id="PA162402737"/>
<dbReference type="VEuPathDB" id="HostDB:ENSG00000138674"/>
<dbReference type="eggNOG" id="KOG0307">
    <property type="taxonomic scope" value="Eukaryota"/>
</dbReference>
<dbReference type="GeneTree" id="ENSGT00390000003175"/>
<dbReference type="HOGENOM" id="CLU_003033_1_0_1"/>
<dbReference type="InParanoid" id="O94979"/>
<dbReference type="OMA" id="WLERPCG"/>
<dbReference type="OrthoDB" id="542917at2759"/>
<dbReference type="PAN-GO" id="O94979">
    <property type="GO annotations" value="6 GO annotations based on evolutionary models"/>
</dbReference>
<dbReference type="PhylomeDB" id="O94979"/>
<dbReference type="TreeFam" id="TF313842"/>
<dbReference type="PathwayCommons" id="O94979"/>
<dbReference type="Reactome" id="R-HSA-204005">
    <property type="pathway name" value="COPII-mediated vesicle transport"/>
</dbReference>
<dbReference type="Reactome" id="R-HSA-2132295">
    <property type="pathway name" value="MHC class II antigen presentation"/>
</dbReference>
<dbReference type="Reactome" id="R-HSA-381038">
    <property type="pathway name" value="XBP1(S) activates chaperone genes"/>
</dbReference>
<dbReference type="Reactome" id="R-HSA-9725370">
    <property type="pathway name" value="Signaling by ALK fusions and activated point mutants"/>
</dbReference>
<dbReference type="Reactome" id="R-HSA-983170">
    <property type="pathway name" value="Antigen Presentation: Folding, assembly and peptide loading of class I MHC"/>
</dbReference>
<dbReference type="SignaLink" id="O94979"/>
<dbReference type="SIGNOR" id="O94979"/>
<dbReference type="BioGRID-ORCS" id="22872">
    <property type="hits" value="30 hits in 1151 CRISPR screens"/>
</dbReference>
<dbReference type="CD-CODE" id="8DB3D246">
    <property type="entry name" value="SCOTIN condensate"/>
</dbReference>
<dbReference type="CD-CODE" id="FB4E32DD">
    <property type="entry name" value="Presynaptic clusters and postsynaptic densities"/>
</dbReference>
<dbReference type="ChiTaRS" id="SEC31A">
    <property type="organism name" value="human"/>
</dbReference>
<dbReference type="EvolutionaryTrace" id="O94979"/>
<dbReference type="GeneWiki" id="SEC31A"/>
<dbReference type="GenomeRNAi" id="22872"/>
<dbReference type="Pharos" id="O94979">
    <property type="development level" value="Tbio"/>
</dbReference>
<dbReference type="PRO" id="PR:O94979"/>
<dbReference type="Proteomes" id="UP000005640">
    <property type="component" value="Chromosome 4"/>
</dbReference>
<dbReference type="RNAct" id="O94979">
    <property type="molecule type" value="protein"/>
</dbReference>
<dbReference type="Bgee" id="ENSG00000138674">
    <property type="expression patterns" value="Expressed in jejunal mucosa and 215 other cell types or tissues"/>
</dbReference>
<dbReference type="ExpressionAtlas" id="O94979">
    <property type="expression patterns" value="baseline and differential"/>
</dbReference>
<dbReference type="GO" id="GO:0030127">
    <property type="term" value="C:COPII vesicle coat"/>
    <property type="evidence" value="ECO:0000314"/>
    <property type="project" value="UniProtKB"/>
</dbReference>
<dbReference type="GO" id="GO:0030134">
    <property type="term" value="C:COPII-coated ER to Golgi transport vesicle"/>
    <property type="evidence" value="ECO:0000314"/>
    <property type="project" value="UniProtKB"/>
</dbReference>
<dbReference type="GO" id="GO:0005737">
    <property type="term" value="C:cytoplasm"/>
    <property type="evidence" value="ECO:0000314"/>
    <property type="project" value="UniProtKB"/>
</dbReference>
<dbReference type="GO" id="GO:0005829">
    <property type="term" value="C:cytosol"/>
    <property type="evidence" value="ECO:0000314"/>
    <property type="project" value="HPA"/>
</dbReference>
<dbReference type="GO" id="GO:0005783">
    <property type="term" value="C:endoplasmic reticulum"/>
    <property type="evidence" value="ECO:0000314"/>
    <property type="project" value="UniProtKB"/>
</dbReference>
<dbReference type="GO" id="GO:0070971">
    <property type="term" value="C:endoplasmic reticulum exit site"/>
    <property type="evidence" value="ECO:0000314"/>
    <property type="project" value="UniProtKB"/>
</dbReference>
<dbReference type="GO" id="GO:0005789">
    <property type="term" value="C:endoplasmic reticulum membrane"/>
    <property type="evidence" value="ECO:0000304"/>
    <property type="project" value="Reactome"/>
</dbReference>
<dbReference type="GO" id="GO:0012507">
    <property type="term" value="C:ER to Golgi transport vesicle membrane"/>
    <property type="evidence" value="ECO:0000304"/>
    <property type="project" value="Reactome"/>
</dbReference>
<dbReference type="GO" id="GO:0043231">
    <property type="term" value="C:intracellular membrane-bounded organelle"/>
    <property type="evidence" value="ECO:0000314"/>
    <property type="project" value="HPA"/>
</dbReference>
<dbReference type="GO" id="GO:0048471">
    <property type="term" value="C:perinuclear region of cytoplasm"/>
    <property type="evidence" value="ECO:0000314"/>
    <property type="project" value="UniProtKB"/>
</dbReference>
<dbReference type="GO" id="GO:0030120">
    <property type="term" value="C:vesicle coat"/>
    <property type="evidence" value="ECO:0000314"/>
    <property type="project" value="MGI"/>
</dbReference>
<dbReference type="GO" id="GO:0048306">
    <property type="term" value="F:calcium-dependent protein binding"/>
    <property type="evidence" value="ECO:0000353"/>
    <property type="project" value="UniProtKB"/>
</dbReference>
<dbReference type="GO" id="GO:0005198">
    <property type="term" value="F:structural molecule activity"/>
    <property type="evidence" value="ECO:0000318"/>
    <property type="project" value="GO_Central"/>
</dbReference>
<dbReference type="GO" id="GO:0090110">
    <property type="term" value="P:COPII-coated vesicle cargo loading"/>
    <property type="evidence" value="ECO:0000314"/>
    <property type="project" value="UniProtKB"/>
</dbReference>
<dbReference type="GO" id="GO:0007029">
    <property type="term" value="P:endoplasmic reticulum organization"/>
    <property type="evidence" value="ECO:0000318"/>
    <property type="project" value="GO_Central"/>
</dbReference>
<dbReference type="GO" id="GO:0006888">
    <property type="term" value="P:endoplasmic reticulum to Golgi vesicle-mediated transport"/>
    <property type="evidence" value="ECO:0000303"/>
    <property type="project" value="UniProtKB"/>
</dbReference>
<dbReference type="GO" id="GO:0015031">
    <property type="term" value="P:protein transport"/>
    <property type="evidence" value="ECO:0007669"/>
    <property type="project" value="UniProtKB-KW"/>
</dbReference>
<dbReference type="GO" id="GO:0051592">
    <property type="term" value="P:response to calcium ion"/>
    <property type="evidence" value="ECO:0000314"/>
    <property type="project" value="UniProtKB"/>
</dbReference>
<dbReference type="FunFam" id="1.20.940.10:FF:000001">
    <property type="entry name" value="Protein transport protein Sec31A isoform A"/>
    <property type="match status" value="1"/>
</dbReference>
<dbReference type="FunFam" id="2.130.10.10:FF:000009">
    <property type="entry name" value="Protein transport protein Sec31A isoform A"/>
    <property type="match status" value="1"/>
</dbReference>
<dbReference type="FunFam" id="1.25.40.1030:FF:000001">
    <property type="entry name" value="protein transport protein Sec31A isoform X3"/>
    <property type="match status" value="1"/>
</dbReference>
<dbReference type="Gene3D" id="1.25.40.1030">
    <property type="match status" value="1"/>
</dbReference>
<dbReference type="Gene3D" id="1.20.940.10">
    <property type="entry name" value="Functional domain of the splicing factor Prp18"/>
    <property type="match status" value="1"/>
</dbReference>
<dbReference type="Gene3D" id="2.130.10.10">
    <property type="entry name" value="YVTN repeat-like/Quinoprotein amine dehydrogenase"/>
    <property type="match status" value="1"/>
</dbReference>
<dbReference type="InterPro" id="IPR024298">
    <property type="entry name" value="Sec16_Sec23-bd"/>
</dbReference>
<dbReference type="InterPro" id="IPR040251">
    <property type="entry name" value="SEC31-like"/>
</dbReference>
<dbReference type="InterPro" id="IPR015943">
    <property type="entry name" value="WD40/YVTN_repeat-like_dom_sf"/>
</dbReference>
<dbReference type="InterPro" id="IPR036322">
    <property type="entry name" value="WD40_repeat_dom_sf"/>
</dbReference>
<dbReference type="InterPro" id="IPR001680">
    <property type="entry name" value="WD40_rpt"/>
</dbReference>
<dbReference type="PANTHER" id="PTHR13923:SF23">
    <property type="entry name" value="PROTEIN TRANSPORT PROTEIN SEC31A"/>
    <property type="match status" value="1"/>
</dbReference>
<dbReference type="PANTHER" id="PTHR13923">
    <property type="entry name" value="SEC31-RELATED PROTEIN"/>
    <property type="match status" value="1"/>
</dbReference>
<dbReference type="Pfam" id="PF12931">
    <property type="entry name" value="TPR_Sec16"/>
    <property type="match status" value="1"/>
</dbReference>
<dbReference type="SMART" id="SM00320">
    <property type="entry name" value="WD40"/>
    <property type="match status" value="6"/>
</dbReference>
<dbReference type="SUPFAM" id="SSF50978">
    <property type="entry name" value="WD40 repeat-like"/>
    <property type="match status" value="1"/>
</dbReference>
<dbReference type="PROSITE" id="PS50082">
    <property type="entry name" value="WD_REPEATS_2"/>
    <property type="match status" value="1"/>
</dbReference>
<dbReference type="PROSITE" id="PS50294">
    <property type="entry name" value="WD_REPEATS_REGION"/>
    <property type="match status" value="1"/>
</dbReference>